<dbReference type="EMBL" id="AK289466">
    <property type="protein sequence ID" value="BAF82155.1"/>
    <property type="molecule type" value="mRNA"/>
</dbReference>
<dbReference type="EMBL" id="AK291820">
    <property type="protein sequence ID" value="BAF84509.1"/>
    <property type="molecule type" value="mRNA"/>
</dbReference>
<dbReference type="EMBL" id="AC004166">
    <property type="status" value="NOT_ANNOTATED_CDS"/>
    <property type="molecule type" value="Genomic_DNA"/>
</dbReference>
<dbReference type="EMBL" id="BC002581">
    <property type="protein sequence ID" value="AAH02581.2"/>
    <property type="molecule type" value="mRNA"/>
</dbReference>
<dbReference type="EMBL" id="BC108680">
    <property type="protein sequence ID" value="AAI08681.1"/>
    <property type="molecule type" value="mRNA"/>
</dbReference>
<dbReference type="EMBL" id="BC119761">
    <property type="protein sequence ID" value="AAI19762.1"/>
    <property type="molecule type" value="mRNA"/>
</dbReference>
<dbReference type="EMBL" id="BC119762">
    <property type="protein sequence ID" value="AAI19763.1"/>
    <property type="molecule type" value="mRNA"/>
</dbReference>
<dbReference type="SMR" id="P0CL84"/>
<dbReference type="iPTMnet" id="P0CL84"/>
<dbReference type="PhosphoSitePlus" id="P0CL84"/>
<dbReference type="BioMuta" id="HGNC:33886"/>
<dbReference type="DMDM" id="332321726"/>
<dbReference type="jPOST" id="P0CL84"/>
<dbReference type="MassIVE" id="P0CL84"/>
<dbReference type="PeptideAtlas" id="P0CL84"/>
<dbReference type="AGR" id="HGNC:33886"/>
<dbReference type="GeneCards" id="STAG3L2"/>
<dbReference type="HGNC" id="HGNC:33886">
    <property type="gene designation" value="STAG3L2"/>
</dbReference>
<dbReference type="neXtProt" id="NX_P0CL84"/>
<dbReference type="InParanoid" id="P0CL84"/>
<dbReference type="PAN-GO" id="P0CL84">
    <property type="GO annotations" value="5 GO annotations based on evolutionary models"/>
</dbReference>
<dbReference type="PathwayCommons" id="P0CL84"/>
<dbReference type="Pharos" id="P0CL84">
    <property type="development level" value="Tdark"/>
</dbReference>
<dbReference type="PRO" id="PR:P0CL84"/>
<dbReference type="Proteomes" id="UP000005640">
    <property type="component" value="Unplaced"/>
</dbReference>
<dbReference type="RNAct" id="P0CL84">
    <property type="molecule type" value="protein"/>
</dbReference>
<dbReference type="GO" id="GO:0005634">
    <property type="term" value="C:nucleus"/>
    <property type="evidence" value="ECO:0007669"/>
    <property type="project" value="UniProtKB-SubCell"/>
</dbReference>
<dbReference type="FunFam" id="1.25.10.10:FF:001129">
    <property type="entry name" value="Putative STAG3-like protein 1"/>
    <property type="match status" value="1"/>
</dbReference>
<dbReference type="Gene3D" id="1.25.10.10">
    <property type="entry name" value="Leucine-rich Repeat Variant"/>
    <property type="match status" value="1"/>
</dbReference>
<dbReference type="InterPro" id="IPR011989">
    <property type="entry name" value="ARM-like"/>
</dbReference>
<dbReference type="InterPro" id="IPR016024">
    <property type="entry name" value="ARM-type_fold"/>
</dbReference>
<dbReference type="InterPro" id="IPR039662">
    <property type="entry name" value="Cohesin_Scc3/SA"/>
</dbReference>
<dbReference type="InterPro" id="IPR020839">
    <property type="entry name" value="SCD"/>
</dbReference>
<dbReference type="PANTHER" id="PTHR11199:SF8">
    <property type="entry name" value="COHESIN SUBUNIT SA-3"/>
    <property type="match status" value="1"/>
</dbReference>
<dbReference type="PANTHER" id="PTHR11199">
    <property type="entry name" value="STROMAL ANTIGEN"/>
    <property type="match status" value="1"/>
</dbReference>
<dbReference type="Pfam" id="PF21581">
    <property type="entry name" value="SCD"/>
    <property type="match status" value="1"/>
</dbReference>
<dbReference type="SUPFAM" id="SSF48371">
    <property type="entry name" value="ARM repeat"/>
    <property type="match status" value="1"/>
</dbReference>
<dbReference type="PROSITE" id="PS51425">
    <property type="entry name" value="SCD"/>
    <property type="match status" value="1"/>
</dbReference>
<reference key="1">
    <citation type="journal article" date="2004" name="Nat. Genet.">
        <title>Complete sequencing and characterization of 21,243 full-length human cDNAs.</title>
        <authorList>
            <person name="Ota T."/>
            <person name="Suzuki Y."/>
            <person name="Nishikawa T."/>
            <person name="Otsuki T."/>
            <person name="Sugiyama T."/>
            <person name="Irie R."/>
            <person name="Wakamatsu A."/>
            <person name="Hayashi K."/>
            <person name="Sato H."/>
            <person name="Nagai K."/>
            <person name="Kimura K."/>
            <person name="Makita H."/>
            <person name="Sekine M."/>
            <person name="Obayashi M."/>
            <person name="Nishi T."/>
            <person name="Shibahara T."/>
            <person name="Tanaka T."/>
            <person name="Ishii S."/>
            <person name="Yamamoto J."/>
            <person name="Saito K."/>
            <person name="Kawai Y."/>
            <person name="Isono Y."/>
            <person name="Nakamura Y."/>
            <person name="Nagahari K."/>
            <person name="Murakami K."/>
            <person name="Yasuda T."/>
            <person name="Iwayanagi T."/>
            <person name="Wagatsuma M."/>
            <person name="Shiratori A."/>
            <person name="Sudo H."/>
            <person name="Hosoiri T."/>
            <person name="Kaku Y."/>
            <person name="Kodaira H."/>
            <person name="Kondo H."/>
            <person name="Sugawara M."/>
            <person name="Takahashi M."/>
            <person name="Kanda K."/>
            <person name="Yokoi T."/>
            <person name="Furuya T."/>
            <person name="Kikkawa E."/>
            <person name="Omura Y."/>
            <person name="Abe K."/>
            <person name="Kamihara K."/>
            <person name="Katsuta N."/>
            <person name="Sato K."/>
            <person name="Tanikawa M."/>
            <person name="Yamazaki M."/>
            <person name="Ninomiya K."/>
            <person name="Ishibashi T."/>
            <person name="Yamashita H."/>
            <person name="Murakawa K."/>
            <person name="Fujimori K."/>
            <person name="Tanai H."/>
            <person name="Kimata M."/>
            <person name="Watanabe M."/>
            <person name="Hiraoka S."/>
            <person name="Chiba Y."/>
            <person name="Ishida S."/>
            <person name="Ono Y."/>
            <person name="Takiguchi S."/>
            <person name="Watanabe S."/>
            <person name="Yosida M."/>
            <person name="Hotuta T."/>
            <person name="Kusano J."/>
            <person name="Kanehori K."/>
            <person name="Takahashi-Fujii A."/>
            <person name="Hara H."/>
            <person name="Tanase T.-O."/>
            <person name="Nomura Y."/>
            <person name="Togiya S."/>
            <person name="Komai F."/>
            <person name="Hara R."/>
            <person name="Takeuchi K."/>
            <person name="Arita M."/>
            <person name="Imose N."/>
            <person name="Musashino K."/>
            <person name="Yuuki H."/>
            <person name="Oshima A."/>
            <person name="Sasaki N."/>
            <person name="Aotsuka S."/>
            <person name="Yoshikawa Y."/>
            <person name="Matsunawa H."/>
            <person name="Ichihara T."/>
            <person name="Shiohata N."/>
            <person name="Sano S."/>
            <person name="Moriya S."/>
            <person name="Momiyama H."/>
            <person name="Satoh N."/>
            <person name="Takami S."/>
            <person name="Terashima Y."/>
            <person name="Suzuki O."/>
            <person name="Nakagawa S."/>
            <person name="Senoh A."/>
            <person name="Mizoguchi H."/>
            <person name="Goto Y."/>
            <person name="Shimizu F."/>
            <person name="Wakebe H."/>
            <person name="Hishigaki H."/>
            <person name="Watanabe T."/>
            <person name="Sugiyama A."/>
            <person name="Takemoto M."/>
            <person name="Kawakami B."/>
            <person name="Yamazaki M."/>
            <person name="Watanabe K."/>
            <person name="Kumagai A."/>
            <person name="Itakura S."/>
            <person name="Fukuzumi Y."/>
            <person name="Fujimori Y."/>
            <person name="Komiyama M."/>
            <person name="Tashiro H."/>
            <person name="Tanigami A."/>
            <person name="Fujiwara T."/>
            <person name="Ono T."/>
            <person name="Yamada K."/>
            <person name="Fujii Y."/>
            <person name="Ozaki K."/>
            <person name="Hirao M."/>
            <person name="Ohmori Y."/>
            <person name="Kawabata A."/>
            <person name="Hikiji T."/>
            <person name="Kobatake N."/>
            <person name="Inagaki H."/>
            <person name="Ikema Y."/>
            <person name="Okamoto S."/>
            <person name="Okitani R."/>
            <person name="Kawakami T."/>
            <person name="Noguchi S."/>
            <person name="Itoh T."/>
            <person name="Shigeta K."/>
            <person name="Senba T."/>
            <person name="Matsumura K."/>
            <person name="Nakajima Y."/>
            <person name="Mizuno T."/>
            <person name="Morinaga M."/>
            <person name="Sasaki M."/>
            <person name="Togashi T."/>
            <person name="Oyama M."/>
            <person name="Hata H."/>
            <person name="Watanabe M."/>
            <person name="Komatsu T."/>
            <person name="Mizushima-Sugano J."/>
            <person name="Satoh T."/>
            <person name="Shirai Y."/>
            <person name="Takahashi Y."/>
            <person name="Nakagawa K."/>
            <person name="Okumura K."/>
            <person name="Nagase T."/>
            <person name="Nomura N."/>
            <person name="Kikuchi H."/>
            <person name="Masuho Y."/>
            <person name="Yamashita R."/>
            <person name="Nakai K."/>
            <person name="Yada T."/>
            <person name="Nakamura Y."/>
            <person name="Ohara O."/>
            <person name="Isogai T."/>
            <person name="Sugano S."/>
        </authorList>
    </citation>
    <scope>NUCLEOTIDE SEQUENCE [LARGE SCALE MRNA] (ISOFORM 1)</scope>
</reference>
<reference key="2">
    <citation type="journal article" date="2003" name="Nature">
        <title>The DNA sequence of human chromosome 7.</title>
        <authorList>
            <person name="Hillier L.W."/>
            <person name="Fulton R.S."/>
            <person name="Fulton L.A."/>
            <person name="Graves T.A."/>
            <person name="Pepin K.H."/>
            <person name="Wagner-McPherson C."/>
            <person name="Layman D."/>
            <person name="Maas J."/>
            <person name="Jaeger S."/>
            <person name="Walker R."/>
            <person name="Wylie K."/>
            <person name="Sekhon M."/>
            <person name="Becker M.C."/>
            <person name="O'Laughlin M.D."/>
            <person name="Schaller M.E."/>
            <person name="Fewell G.A."/>
            <person name="Delehaunty K.D."/>
            <person name="Miner T.L."/>
            <person name="Nash W.E."/>
            <person name="Cordes M."/>
            <person name="Du H."/>
            <person name="Sun H."/>
            <person name="Edwards J."/>
            <person name="Bradshaw-Cordum H."/>
            <person name="Ali J."/>
            <person name="Andrews S."/>
            <person name="Isak A."/>
            <person name="Vanbrunt A."/>
            <person name="Nguyen C."/>
            <person name="Du F."/>
            <person name="Lamar B."/>
            <person name="Courtney L."/>
            <person name="Kalicki J."/>
            <person name="Ozersky P."/>
            <person name="Bielicki L."/>
            <person name="Scott K."/>
            <person name="Holmes A."/>
            <person name="Harkins R."/>
            <person name="Harris A."/>
            <person name="Strong C.M."/>
            <person name="Hou S."/>
            <person name="Tomlinson C."/>
            <person name="Dauphin-Kohlberg S."/>
            <person name="Kozlowicz-Reilly A."/>
            <person name="Leonard S."/>
            <person name="Rohlfing T."/>
            <person name="Rock S.M."/>
            <person name="Tin-Wollam A.-M."/>
            <person name="Abbott A."/>
            <person name="Minx P."/>
            <person name="Maupin R."/>
            <person name="Strowmatt C."/>
            <person name="Latreille P."/>
            <person name="Miller N."/>
            <person name="Johnson D."/>
            <person name="Murray J."/>
            <person name="Woessner J.P."/>
            <person name="Wendl M.C."/>
            <person name="Yang S.-P."/>
            <person name="Schultz B.R."/>
            <person name="Wallis J.W."/>
            <person name="Spieth J."/>
            <person name="Bieri T.A."/>
            <person name="Nelson J.O."/>
            <person name="Berkowicz N."/>
            <person name="Wohldmann P.E."/>
            <person name="Cook L.L."/>
            <person name="Hickenbotham M.T."/>
            <person name="Eldred J."/>
            <person name="Williams D."/>
            <person name="Bedell J.A."/>
            <person name="Mardis E.R."/>
            <person name="Clifton S.W."/>
            <person name="Chissoe S.L."/>
            <person name="Marra M.A."/>
            <person name="Raymond C."/>
            <person name="Haugen E."/>
            <person name="Gillett W."/>
            <person name="Zhou Y."/>
            <person name="James R."/>
            <person name="Phelps K."/>
            <person name="Iadanoto S."/>
            <person name="Bubb K."/>
            <person name="Simms E."/>
            <person name="Levy R."/>
            <person name="Clendenning J."/>
            <person name="Kaul R."/>
            <person name="Kent W.J."/>
            <person name="Furey T.S."/>
            <person name="Baertsch R.A."/>
            <person name="Brent M.R."/>
            <person name="Keibler E."/>
            <person name="Flicek P."/>
            <person name="Bork P."/>
            <person name="Suyama M."/>
            <person name="Bailey J.A."/>
            <person name="Portnoy M.E."/>
            <person name="Torrents D."/>
            <person name="Chinwalla A.T."/>
            <person name="Gish W.R."/>
            <person name="Eddy S.R."/>
            <person name="McPherson J.D."/>
            <person name="Olson M.V."/>
            <person name="Eichler E.E."/>
            <person name="Green E.D."/>
            <person name="Waterston R.H."/>
            <person name="Wilson R.K."/>
        </authorList>
    </citation>
    <scope>NUCLEOTIDE SEQUENCE [LARGE SCALE GENOMIC DNA]</scope>
</reference>
<reference key="3">
    <citation type="journal article" date="2004" name="Genome Res.">
        <title>The status, quality, and expansion of the NIH full-length cDNA project: the Mammalian Gene Collection (MGC).</title>
        <authorList>
            <consortium name="The MGC Project Team"/>
        </authorList>
    </citation>
    <scope>NUCLEOTIDE SEQUENCE [LARGE SCALE MRNA] (ISOFORM 2)</scope>
    <source>
        <tissue>Brain</tissue>
        <tissue>Mammary gland</tissue>
        <tissue>Testis</tissue>
    </source>
</reference>
<keyword id="KW-0025">Alternative splicing</keyword>
<keyword id="KW-0539">Nucleus</keyword>
<keyword id="KW-1185">Reference proteome</keyword>
<accession>P0CL84</accession>
<accession>A6NMT8</accession>
<accession>A8K0A1</accession>
<accession>Q32NE4</accession>
<accession>Q6NXR2</accession>
<accession>Q7L5M5</accession>
<accession>Q7Z5K6</accession>
<proteinExistence type="uncertain"/>
<name>ST3L2_HUMAN</name>
<evidence type="ECO:0000255" key="1">
    <source>
        <dbReference type="PROSITE-ProRule" id="PRU00750"/>
    </source>
</evidence>
<evidence type="ECO:0000303" key="2">
    <source>
    </source>
</evidence>
<evidence type="ECO:0000305" key="3"/>
<sequence>MIFSMLRKLPKVTCRDVLPEIRAICIEEIGCWMQSYSTSFLTDSYLKYIGWTLHDKHREVRVKCVKALKGLYGNRDLTARLELFTGRFKDWMVSMIVDREYSVAVEAVRLLILILKNMEGVLMDVDCESVYPIV</sequence>
<comment type="subcellular location">
    <subcellularLocation>
        <location evidence="1">Nucleus</location>
    </subcellularLocation>
</comment>
<comment type="alternative products">
    <event type="alternative splicing"/>
    <isoform>
        <id>P0CL84-1</id>
        <name>1</name>
        <sequence type="displayed"/>
    </isoform>
    <isoform>
        <id>P0CL84-2</id>
        <name>2</name>
        <sequence type="described" ref="VSP_041015"/>
    </isoform>
</comment>
<comment type="similarity">
    <text evidence="3">Belongs to the SCC3 family.</text>
</comment>
<comment type="caution">
    <text evidence="3">Could be the product of a pseudogene.</text>
</comment>
<feature type="chain" id="PRO_0000407999" description="Putative STAG3-like protein 2">
    <location>
        <begin position="1"/>
        <end position="134"/>
    </location>
</feature>
<feature type="domain" description="SCD" evidence="1">
    <location>
        <begin position="10"/>
        <end position="95"/>
    </location>
</feature>
<feature type="splice variant" id="VSP_041015" description="In isoform 2." evidence="2">
    <original>MIFSMLRKLPKVTCRDVLPEIRAICIEEIGCWMQSYSTSFLTDSYLKYIGWTLHDK</original>
    <variation>MQ</variation>
    <location>
        <begin position="1"/>
        <end position="56"/>
    </location>
</feature>
<feature type="sequence conflict" description="In Ref. 1; BAF84509 and 3; AAI08681/AAI19763." evidence="3" ref="1 3">
    <original>V</original>
    <variation>M</variation>
    <location>
        <position position="97"/>
    </location>
</feature>
<feature type="sequence conflict" description="In Ref. 1; BAF82155." evidence="3" ref="1">
    <original>M</original>
    <variation>T</variation>
    <location>
        <position position="118"/>
    </location>
</feature>
<gene>
    <name type="primary">STAG3L2</name>
</gene>
<protein>
    <recommendedName>
        <fullName>Putative STAG3-like protein 2</fullName>
    </recommendedName>
    <alternativeName>
        <fullName>Stromal antigen 3-like protein 2</fullName>
    </alternativeName>
</protein>
<organism>
    <name type="scientific">Homo sapiens</name>
    <name type="common">Human</name>
    <dbReference type="NCBI Taxonomy" id="9606"/>
    <lineage>
        <taxon>Eukaryota</taxon>
        <taxon>Metazoa</taxon>
        <taxon>Chordata</taxon>
        <taxon>Craniata</taxon>
        <taxon>Vertebrata</taxon>
        <taxon>Euteleostomi</taxon>
        <taxon>Mammalia</taxon>
        <taxon>Eutheria</taxon>
        <taxon>Euarchontoglires</taxon>
        <taxon>Primates</taxon>
        <taxon>Haplorrhini</taxon>
        <taxon>Catarrhini</taxon>
        <taxon>Hominidae</taxon>
        <taxon>Homo</taxon>
    </lineage>
</organism>